<feature type="initiator methionine" description="Removed" evidence="2">
    <location>
        <position position="1"/>
    </location>
</feature>
<feature type="chain" id="PRO_0000252488" description="Programmed cell death protein 5">
    <location>
        <begin position="2"/>
        <end position="125"/>
    </location>
</feature>
<feature type="region of interest" description="Disordered" evidence="3">
    <location>
        <begin position="16"/>
        <end position="36"/>
    </location>
</feature>
<feature type="modified residue" description="N-acetylalanine" evidence="2">
    <location>
        <position position="2"/>
    </location>
</feature>
<feature type="modified residue" description="Phosphoserine" evidence="2">
    <location>
        <position position="51"/>
    </location>
</feature>
<feature type="modified residue" description="N6-acetyllysine" evidence="2">
    <location>
        <position position="63"/>
    </location>
</feature>
<feature type="modified residue" description="Phosphoserine" evidence="2">
    <location>
        <position position="119"/>
    </location>
</feature>
<dbReference type="EMBL" id="CR858553">
    <property type="protein sequence ID" value="CAH90780.1"/>
    <property type="molecule type" value="mRNA"/>
</dbReference>
<dbReference type="RefSeq" id="NP_001125439.1">
    <property type="nucleotide sequence ID" value="NM_001131967.1"/>
</dbReference>
<dbReference type="BMRB" id="Q5RBT0"/>
<dbReference type="SMR" id="Q5RBT0"/>
<dbReference type="FunCoup" id="Q5RBT0">
    <property type="interactions" value="2421"/>
</dbReference>
<dbReference type="STRING" id="9601.ENSPPYP00000010993"/>
<dbReference type="GeneID" id="100172347"/>
<dbReference type="KEGG" id="pon:100172347"/>
<dbReference type="CTD" id="9141"/>
<dbReference type="eggNOG" id="KOG3431">
    <property type="taxonomic scope" value="Eukaryota"/>
</dbReference>
<dbReference type="InParanoid" id="Q5RBT0"/>
<dbReference type="OrthoDB" id="10252486at2759"/>
<dbReference type="Proteomes" id="UP000001595">
    <property type="component" value="Unplaced"/>
</dbReference>
<dbReference type="GO" id="GO:0005829">
    <property type="term" value="C:cytosol"/>
    <property type="evidence" value="ECO:0007669"/>
    <property type="project" value="TreeGrafter"/>
</dbReference>
<dbReference type="GO" id="GO:0005634">
    <property type="term" value="C:nucleus"/>
    <property type="evidence" value="ECO:0007669"/>
    <property type="project" value="TreeGrafter"/>
</dbReference>
<dbReference type="GO" id="GO:0003677">
    <property type="term" value="F:DNA binding"/>
    <property type="evidence" value="ECO:0007669"/>
    <property type="project" value="InterPro"/>
</dbReference>
<dbReference type="GO" id="GO:0006915">
    <property type="term" value="P:apoptotic process"/>
    <property type="evidence" value="ECO:0007669"/>
    <property type="project" value="UniProtKB-KW"/>
</dbReference>
<dbReference type="FunFam" id="1.10.8.140:FF:000001">
    <property type="entry name" value="Programmed cell death protein 5"/>
    <property type="match status" value="1"/>
</dbReference>
<dbReference type="Gene3D" id="1.10.8.140">
    <property type="entry name" value="PDCD5-like"/>
    <property type="match status" value="1"/>
</dbReference>
<dbReference type="InterPro" id="IPR002836">
    <property type="entry name" value="PDCD5-like"/>
</dbReference>
<dbReference type="InterPro" id="IPR036883">
    <property type="entry name" value="PDCD5-like_sf"/>
</dbReference>
<dbReference type="PANTHER" id="PTHR10840">
    <property type="entry name" value="PROGRAMMED CELL DEATH PROTEIN 5"/>
    <property type="match status" value="1"/>
</dbReference>
<dbReference type="PANTHER" id="PTHR10840:SF0">
    <property type="entry name" value="PROGRAMMED CELL DEATH PROTEIN 5"/>
    <property type="match status" value="1"/>
</dbReference>
<dbReference type="Pfam" id="PF01984">
    <property type="entry name" value="dsDNA_bind"/>
    <property type="match status" value="1"/>
</dbReference>
<dbReference type="PIRSF" id="PIRSF015730">
    <property type="entry name" value="TFAR19"/>
    <property type="match status" value="1"/>
</dbReference>
<dbReference type="SUPFAM" id="SSF46950">
    <property type="entry name" value="Double-stranded DNA-binding domain"/>
    <property type="match status" value="1"/>
</dbReference>
<keyword id="KW-0007">Acetylation</keyword>
<keyword id="KW-0053">Apoptosis</keyword>
<keyword id="KW-0597">Phosphoprotein</keyword>
<keyword id="KW-1185">Reference proteome</keyword>
<gene>
    <name type="primary">PDCD5</name>
</gene>
<organism>
    <name type="scientific">Pongo abelii</name>
    <name type="common">Sumatran orangutan</name>
    <name type="synonym">Pongo pygmaeus abelii</name>
    <dbReference type="NCBI Taxonomy" id="9601"/>
    <lineage>
        <taxon>Eukaryota</taxon>
        <taxon>Metazoa</taxon>
        <taxon>Chordata</taxon>
        <taxon>Craniata</taxon>
        <taxon>Vertebrata</taxon>
        <taxon>Euteleostomi</taxon>
        <taxon>Mammalia</taxon>
        <taxon>Eutheria</taxon>
        <taxon>Euarchontoglires</taxon>
        <taxon>Primates</taxon>
        <taxon>Haplorrhini</taxon>
        <taxon>Catarrhini</taxon>
        <taxon>Hominidae</taxon>
        <taxon>Pongo</taxon>
    </lineage>
</organism>
<sequence>MADEELEALRRQRLAELQAKHGDPGDAAQQEAKHREAEMRNSILAQVLDQSARARLSNLALVKPEKTKAVENYLIQMARYGQLSEKVSEQGLIEILKKVSQQTEKTTTVKFNRRKVMDSDEDDDY</sequence>
<reference key="1">
    <citation type="submission" date="2004-11" db="EMBL/GenBank/DDBJ databases">
        <authorList>
            <consortium name="The German cDNA consortium"/>
        </authorList>
    </citation>
    <scope>NUCLEOTIDE SEQUENCE [LARGE SCALE MRNA]</scope>
    <source>
        <tissue>Heart</tissue>
    </source>
</reference>
<evidence type="ECO:0000250" key="1"/>
<evidence type="ECO:0000250" key="2">
    <source>
        <dbReference type="UniProtKB" id="O14737"/>
    </source>
</evidence>
<evidence type="ECO:0000256" key="3">
    <source>
        <dbReference type="SAM" id="MobiDB-lite"/>
    </source>
</evidence>
<evidence type="ECO:0000305" key="4"/>
<proteinExistence type="evidence at transcript level"/>
<comment type="function">
    <text evidence="1">May function in the process of apoptosis.</text>
</comment>
<comment type="similarity">
    <text evidence="4">Belongs to the PDCD5 family.</text>
</comment>
<name>PDCD5_PONAB</name>
<protein>
    <recommendedName>
        <fullName>Programmed cell death protein 5</fullName>
    </recommendedName>
</protein>
<accession>Q5RBT0</accession>